<proteinExistence type="inferred from homology"/>
<accession>Q1CRN4</accession>
<feature type="chain" id="PRO_0000302579" description="Acyl-[acyl-carrier-protein]--UDP-N-acetylglucosamine O-acyltransferase">
    <location>
        <begin position="1"/>
        <end position="270"/>
    </location>
</feature>
<protein>
    <recommendedName>
        <fullName evidence="1">Acyl-[acyl-carrier-protein]--UDP-N-acetylglucosamine O-acyltransferase</fullName>
        <shortName evidence="1">UDP-N-acetylglucosamine acyltransferase</shortName>
        <ecNumber evidence="1">2.3.1.129</ecNumber>
    </recommendedName>
</protein>
<name>LPXA_HELPH</name>
<comment type="function">
    <text evidence="1">Involved in the biosynthesis of lipid A, a phosphorylated glycolipid that anchors the lipopolysaccharide to the outer membrane of the cell.</text>
</comment>
<comment type="catalytic activity">
    <reaction evidence="1">
        <text>a (3R)-hydroxyacyl-[ACP] + UDP-N-acetyl-alpha-D-glucosamine = a UDP-3-O-[(3R)-3-hydroxyacyl]-N-acetyl-alpha-D-glucosamine + holo-[ACP]</text>
        <dbReference type="Rhea" id="RHEA:67812"/>
        <dbReference type="Rhea" id="RHEA-COMP:9685"/>
        <dbReference type="Rhea" id="RHEA-COMP:9945"/>
        <dbReference type="ChEBI" id="CHEBI:57705"/>
        <dbReference type="ChEBI" id="CHEBI:64479"/>
        <dbReference type="ChEBI" id="CHEBI:78827"/>
        <dbReference type="ChEBI" id="CHEBI:173225"/>
        <dbReference type="EC" id="2.3.1.129"/>
    </reaction>
</comment>
<comment type="pathway">
    <text evidence="1">Glycolipid biosynthesis; lipid IV(A) biosynthesis; lipid IV(A) from (3R)-3-hydroxytetradecanoyl-[acyl-carrier-protein] and UDP-N-acetyl-alpha-D-glucosamine: step 1/6.</text>
</comment>
<comment type="subunit">
    <text evidence="1">Homotrimer.</text>
</comment>
<comment type="subcellular location">
    <subcellularLocation>
        <location evidence="1">Cytoplasm</location>
    </subcellularLocation>
</comment>
<comment type="similarity">
    <text evidence="1">Belongs to the transferase hexapeptide repeat family. LpxA subfamily.</text>
</comment>
<evidence type="ECO:0000255" key="1">
    <source>
        <dbReference type="HAMAP-Rule" id="MF_00387"/>
    </source>
</evidence>
<sequence>MSKIAKTAIISPKAEINKGVEIGEFCVIGDGVKLDEGVKLHNNVTLQGHTFIGKNTEIFPFAVLGTQPQDLKYKGEYSELIIGEDNLIREFCMINPGTEGGIKKTLIGDKNLLMAYVHVAHDCVIGSHCILANGVTLAGHIEIGDYVNIGGLTAIHQFVRIAKGCMIAGKSALGKDVPPYCTVEGNRAFIRGLNRHRMRQLLESKDIDFIHVLYKRLFRPVPSLRESAKLELEEHANNPFVKEICSFILESSRGVAYKSSEYSSEEKQEE</sequence>
<dbReference type="EC" id="2.3.1.129" evidence="1"/>
<dbReference type="EMBL" id="CP000241">
    <property type="protein sequence ID" value="ABF85388.1"/>
    <property type="molecule type" value="Genomic_DNA"/>
</dbReference>
<dbReference type="RefSeq" id="WP_000034139.1">
    <property type="nucleotide sequence ID" value="NC_008086.1"/>
</dbReference>
<dbReference type="SMR" id="Q1CRN4"/>
<dbReference type="KEGG" id="hpa:HPAG1_1321"/>
<dbReference type="HOGENOM" id="CLU_061249_0_0_7"/>
<dbReference type="UniPathway" id="UPA00359">
    <property type="reaction ID" value="UER00477"/>
</dbReference>
<dbReference type="GO" id="GO:0005737">
    <property type="term" value="C:cytoplasm"/>
    <property type="evidence" value="ECO:0007669"/>
    <property type="project" value="UniProtKB-SubCell"/>
</dbReference>
<dbReference type="GO" id="GO:0016020">
    <property type="term" value="C:membrane"/>
    <property type="evidence" value="ECO:0007669"/>
    <property type="project" value="GOC"/>
</dbReference>
<dbReference type="GO" id="GO:0008780">
    <property type="term" value="F:acyl-[acyl-carrier-protein]-UDP-N-acetylglucosamine O-acyltransferase activity"/>
    <property type="evidence" value="ECO:0007669"/>
    <property type="project" value="UniProtKB-UniRule"/>
</dbReference>
<dbReference type="GO" id="GO:0009245">
    <property type="term" value="P:lipid A biosynthetic process"/>
    <property type="evidence" value="ECO:0007669"/>
    <property type="project" value="UniProtKB-UniRule"/>
</dbReference>
<dbReference type="CDD" id="cd03351">
    <property type="entry name" value="LbH_UDP-GlcNAc_AT"/>
    <property type="match status" value="1"/>
</dbReference>
<dbReference type="Gene3D" id="2.160.10.10">
    <property type="entry name" value="Hexapeptide repeat proteins"/>
    <property type="match status" value="1"/>
</dbReference>
<dbReference type="Gene3D" id="1.20.1180.10">
    <property type="entry name" value="Udp N-acetylglucosamine O-acyltransferase, C-terminal domain"/>
    <property type="match status" value="1"/>
</dbReference>
<dbReference type="HAMAP" id="MF_00387">
    <property type="entry name" value="LpxA"/>
    <property type="match status" value="1"/>
</dbReference>
<dbReference type="InterPro" id="IPR029098">
    <property type="entry name" value="Acetyltransf_C"/>
</dbReference>
<dbReference type="InterPro" id="IPR037157">
    <property type="entry name" value="Acetyltransf_C_sf"/>
</dbReference>
<dbReference type="InterPro" id="IPR001451">
    <property type="entry name" value="Hexapep"/>
</dbReference>
<dbReference type="InterPro" id="IPR010137">
    <property type="entry name" value="Lipid_A_LpxA"/>
</dbReference>
<dbReference type="InterPro" id="IPR011004">
    <property type="entry name" value="Trimer_LpxA-like_sf"/>
</dbReference>
<dbReference type="NCBIfam" id="TIGR01852">
    <property type="entry name" value="lipid_A_lpxA"/>
    <property type="match status" value="1"/>
</dbReference>
<dbReference type="NCBIfam" id="NF003657">
    <property type="entry name" value="PRK05289.1"/>
    <property type="match status" value="1"/>
</dbReference>
<dbReference type="PANTHER" id="PTHR43480">
    <property type="entry name" value="ACYL-[ACYL-CARRIER-PROTEIN]--UDP-N-ACETYLGLUCOSAMINE O-ACYLTRANSFERASE"/>
    <property type="match status" value="1"/>
</dbReference>
<dbReference type="PANTHER" id="PTHR43480:SF1">
    <property type="entry name" value="ACYL-[ACYL-CARRIER-PROTEIN]--UDP-N-ACETYLGLUCOSAMINE O-ACYLTRANSFERASE, MITOCHONDRIAL-RELATED"/>
    <property type="match status" value="1"/>
</dbReference>
<dbReference type="Pfam" id="PF13720">
    <property type="entry name" value="Acetyltransf_11"/>
    <property type="match status" value="1"/>
</dbReference>
<dbReference type="Pfam" id="PF00132">
    <property type="entry name" value="Hexapep"/>
    <property type="match status" value="1"/>
</dbReference>
<dbReference type="PIRSF" id="PIRSF000456">
    <property type="entry name" value="UDP-GlcNAc_acltr"/>
    <property type="match status" value="1"/>
</dbReference>
<dbReference type="SUPFAM" id="SSF51161">
    <property type="entry name" value="Trimeric LpxA-like enzymes"/>
    <property type="match status" value="1"/>
</dbReference>
<dbReference type="PROSITE" id="PS00101">
    <property type="entry name" value="HEXAPEP_TRANSFERASES"/>
    <property type="match status" value="1"/>
</dbReference>
<reference key="1">
    <citation type="journal article" date="2006" name="Proc. Natl. Acad. Sci. U.S.A.">
        <title>The complete genome sequence of a chronic atrophic gastritis Helicobacter pylori strain: evolution during disease progression.</title>
        <authorList>
            <person name="Oh J.D."/>
            <person name="Kling-Baeckhed H."/>
            <person name="Giannakis M."/>
            <person name="Xu J."/>
            <person name="Fulton R.S."/>
            <person name="Fulton L.A."/>
            <person name="Cordum H.S."/>
            <person name="Wang C."/>
            <person name="Elliott G."/>
            <person name="Edwards J."/>
            <person name="Mardis E.R."/>
            <person name="Engstrand L.G."/>
            <person name="Gordon J.I."/>
        </authorList>
    </citation>
    <scope>NUCLEOTIDE SEQUENCE [LARGE SCALE GENOMIC DNA]</scope>
    <source>
        <strain>HPAG1</strain>
    </source>
</reference>
<organism>
    <name type="scientific">Helicobacter pylori (strain HPAG1)</name>
    <dbReference type="NCBI Taxonomy" id="357544"/>
    <lineage>
        <taxon>Bacteria</taxon>
        <taxon>Pseudomonadati</taxon>
        <taxon>Campylobacterota</taxon>
        <taxon>Epsilonproteobacteria</taxon>
        <taxon>Campylobacterales</taxon>
        <taxon>Helicobacteraceae</taxon>
        <taxon>Helicobacter</taxon>
    </lineage>
</organism>
<keyword id="KW-0012">Acyltransferase</keyword>
<keyword id="KW-0963">Cytoplasm</keyword>
<keyword id="KW-0441">Lipid A biosynthesis</keyword>
<keyword id="KW-0444">Lipid biosynthesis</keyword>
<keyword id="KW-0443">Lipid metabolism</keyword>
<keyword id="KW-0677">Repeat</keyword>
<keyword id="KW-0808">Transferase</keyword>
<gene>
    <name evidence="1" type="primary">lpxA</name>
    <name type="ordered locus">HPAG1_1321</name>
</gene>